<accession>A1AW65</accession>
<feature type="chain" id="PRO_1000198063" description="Phosphomethylpyrimidine synthase">
    <location>
        <begin position="1"/>
        <end position="622"/>
    </location>
</feature>
<feature type="binding site" evidence="1">
    <location>
        <position position="226"/>
    </location>
    <ligand>
        <name>substrate</name>
    </ligand>
</feature>
<feature type="binding site" evidence="1">
    <location>
        <position position="255"/>
    </location>
    <ligand>
        <name>substrate</name>
    </ligand>
</feature>
<feature type="binding site" evidence="1">
    <location>
        <position position="284"/>
    </location>
    <ligand>
        <name>substrate</name>
    </ligand>
</feature>
<feature type="binding site" evidence="1">
    <location>
        <position position="320"/>
    </location>
    <ligand>
        <name>substrate</name>
    </ligand>
</feature>
<feature type="binding site" evidence="1">
    <location>
        <begin position="340"/>
        <end position="342"/>
    </location>
    <ligand>
        <name>substrate</name>
    </ligand>
</feature>
<feature type="binding site" evidence="1">
    <location>
        <begin position="381"/>
        <end position="384"/>
    </location>
    <ligand>
        <name>substrate</name>
    </ligand>
</feature>
<feature type="binding site" evidence="1">
    <location>
        <position position="420"/>
    </location>
    <ligand>
        <name>substrate</name>
    </ligand>
</feature>
<feature type="binding site" evidence="1">
    <location>
        <position position="424"/>
    </location>
    <ligand>
        <name>Zn(2+)</name>
        <dbReference type="ChEBI" id="CHEBI:29105"/>
    </ligand>
</feature>
<feature type="binding site" evidence="1">
    <location>
        <position position="447"/>
    </location>
    <ligand>
        <name>substrate</name>
    </ligand>
</feature>
<feature type="binding site" evidence="1">
    <location>
        <position position="488"/>
    </location>
    <ligand>
        <name>Zn(2+)</name>
        <dbReference type="ChEBI" id="CHEBI:29105"/>
    </ligand>
</feature>
<feature type="binding site" evidence="1">
    <location>
        <position position="568"/>
    </location>
    <ligand>
        <name>[4Fe-4S] cluster</name>
        <dbReference type="ChEBI" id="CHEBI:49883"/>
        <note>4Fe-4S-S-AdoMet</note>
    </ligand>
</feature>
<feature type="binding site" evidence="1">
    <location>
        <position position="571"/>
    </location>
    <ligand>
        <name>[4Fe-4S] cluster</name>
        <dbReference type="ChEBI" id="CHEBI:49883"/>
        <note>4Fe-4S-S-AdoMet</note>
    </ligand>
</feature>
<feature type="binding site" evidence="1">
    <location>
        <position position="576"/>
    </location>
    <ligand>
        <name>[4Fe-4S] cluster</name>
        <dbReference type="ChEBI" id="CHEBI:49883"/>
        <note>4Fe-4S-S-AdoMet</note>
    </ligand>
</feature>
<protein>
    <recommendedName>
        <fullName evidence="1">Phosphomethylpyrimidine synthase</fullName>
        <ecNumber evidence="1">4.1.99.17</ecNumber>
    </recommendedName>
    <alternativeName>
        <fullName evidence="1">Hydroxymethylpyrimidine phosphate synthase</fullName>
        <shortName evidence="1">HMP-P synthase</shortName>
        <shortName evidence="1">HMP-phosphate synthase</shortName>
        <shortName evidence="1">HMPP synthase</shortName>
    </alternativeName>
    <alternativeName>
        <fullName evidence="1">Thiamine biosynthesis protein ThiC</fullName>
    </alternativeName>
</protein>
<gene>
    <name evidence="1" type="primary">thiC</name>
    <name type="ordered locus">Rmag_0410</name>
</gene>
<organism>
    <name type="scientific">Ruthia magnifica subsp. Calyptogena magnifica</name>
    <dbReference type="NCBI Taxonomy" id="413404"/>
    <lineage>
        <taxon>Bacteria</taxon>
        <taxon>Pseudomonadati</taxon>
        <taxon>Pseudomonadota</taxon>
        <taxon>Gammaproteobacteria</taxon>
        <taxon>Candidatus Pseudothioglobaceae</taxon>
        <taxon>Candidatus Ruthturnera</taxon>
    </lineage>
</organism>
<name>THIC_RUTMC</name>
<dbReference type="EC" id="4.1.99.17" evidence="1"/>
<dbReference type="EMBL" id="CP000488">
    <property type="protein sequence ID" value="ABL02172.1"/>
    <property type="molecule type" value="Genomic_DNA"/>
</dbReference>
<dbReference type="RefSeq" id="WP_011737797.1">
    <property type="nucleotide sequence ID" value="NC_008610.1"/>
</dbReference>
<dbReference type="SMR" id="A1AW65"/>
<dbReference type="STRING" id="413404.Rmag_0410"/>
<dbReference type="KEGG" id="rma:Rmag_0410"/>
<dbReference type="eggNOG" id="COG0422">
    <property type="taxonomic scope" value="Bacteria"/>
</dbReference>
<dbReference type="HOGENOM" id="CLU_013181_2_1_6"/>
<dbReference type="OrthoDB" id="9805897at2"/>
<dbReference type="UniPathway" id="UPA00060"/>
<dbReference type="Proteomes" id="UP000002587">
    <property type="component" value="Chromosome"/>
</dbReference>
<dbReference type="GO" id="GO:0005829">
    <property type="term" value="C:cytosol"/>
    <property type="evidence" value="ECO:0007669"/>
    <property type="project" value="TreeGrafter"/>
</dbReference>
<dbReference type="GO" id="GO:0051539">
    <property type="term" value="F:4 iron, 4 sulfur cluster binding"/>
    <property type="evidence" value="ECO:0007669"/>
    <property type="project" value="UniProtKB-KW"/>
</dbReference>
<dbReference type="GO" id="GO:0016830">
    <property type="term" value="F:carbon-carbon lyase activity"/>
    <property type="evidence" value="ECO:0007669"/>
    <property type="project" value="InterPro"/>
</dbReference>
<dbReference type="GO" id="GO:0008270">
    <property type="term" value="F:zinc ion binding"/>
    <property type="evidence" value="ECO:0007669"/>
    <property type="project" value="UniProtKB-UniRule"/>
</dbReference>
<dbReference type="GO" id="GO:0009228">
    <property type="term" value="P:thiamine biosynthetic process"/>
    <property type="evidence" value="ECO:0007669"/>
    <property type="project" value="UniProtKB-KW"/>
</dbReference>
<dbReference type="GO" id="GO:0009229">
    <property type="term" value="P:thiamine diphosphate biosynthetic process"/>
    <property type="evidence" value="ECO:0007669"/>
    <property type="project" value="UniProtKB-UniRule"/>
</dbReference>
<dbReference type="FunFam" id="3.20.20.540:FF:000001">
    <property type="entry name" value="Phosphomethylpyrimidine synthase"/>
    <property type="match status" value="1"/>
</dbReference>
<dbReference type="Gene3D" id="6.10.250.620">
    <property type="match status" value="1"/>
</dbReference>
<dbReference type="Gene3D" id="3.20.20.540">
    <property type="entry name" value="Radical SAM ThiC family, central domain"/>
    <property type="match status" value="1"/>
</dbReference>
<dbReference type="HAMAP" id="MF_00089">
    <property type="entry name" value="ThiC"/>
    <property type="match status" value="1"/>
</dbReference>
<dbReference type="InterPro" id="IPR037509">
    <property type="entry name" value="ThiC"/>
</dbReference>
<dbReference type="InterPro" id="IPR025747">
    <property type="entry name" value="ThiC-associated_dom"/>
</dbReference>
<dbReference type="InterPro" id="IPR038521">
    <property type="entry name" value="ThiC/Bza_core_dom"/>
</dbReference>
<dbReference type="InterPro" id="IPR002817">
    <property type="entry name" value="ThiC/BzaA/B"/>
</dbReference>
<dbReference type="NCBIfam" id="NF006763">
    <property type="entry name" value="PRK09284.1"/>
    <property type="match status" value="1"/>
</dbReference>
<dbReference type="NCBIfam" id="NF009895">
    <property type="entry name" value="PRK13352.1"/>
    <property type="match status" value="1"/>
</dbReference>
<dbReference type="NCBIfam" id="TIGR00190">
    <property type="entry name" value="thiC"/>
    <property type="match status" value="1"/>
</dbReference>
<dbReference type="PANTHER" id="PTHR30557:SF1">
    <property type="entry name" value="PHOSPHOMETHYLPYRIMIDINE SYNTHASE, CHLOROPLASTIC"/>
    <property type="match status" value="1"/>
</dbReference>
<dbReference type="PANTHER" id="PTHR30557">
    <property type="entry name" value="THIAMINE BIOSYNTHESIS PROTEIN THIC"/>
    <property type="match status" value="1"/>
</dbReference>
<dbReference type="Pfam" id="PF13667">
    <property type="entry name" value="ThiC-associated"/>
    <property type="match status" value="1"/>
</dbReference>
<dbReference type="Pfam" id="PF01964">
    <property type="entry name" value="ThiC_Rad_SAM"/>
    <property type="match status" value="1"/>
</dbReference>
<dbReference type="SFLD" id="SFLDF00407">
    <property type="entry name" value="phosphomethylpyrimidine_syntha"/>
    <property type="match status" value="1"/>
</dbReference>
<dbReference type="SFLD" id="SFLDG01114">
    <property type="entry name" value="phosphomethylpyrimidine_syntha"/>
    <property type="match status" value="1"/>
</dbReference>
<dbReference type="SFLD" id="SFLDS00113">
    <property type="entry name" value="Radical_SAM_Phosphomethylpyrim"/>
    <property type="match status" value="1"/>
</dbReference>
<comment type="function">
    <text evidence="1">Catalyzes the synthesis of the hydroxymethylpyrimidine phosphate (HMP-P) moiety of thiamine from aminoimidazole ribotide (AIR) in a radical S-adenosyl-L-methionine (SAM)-dependent reaction.</text>
</comment>
<comment type="catalytic activity">
    <reaction evidence="1">
        <text>5-amino-1-(5-phospho-beta-D-ribosyl)imidazole + S-adenosyl-L-methionine = 4-amino-2-methyl-5-(phosphooxymethyl)pyrimidine + CO + 5'-deoxyadenosine + formate + L-methionine + 3 H(+)</text>
        <dbReference type="Rhea" id="RHEA:24840"/>
        <dbReference type="ChEBI" id="CHEBI:15378"/>
        <dbReference type="ChEBI" id="CHEBI:15740"/>
        <dbReference type="ChEBI" id="CHEBI:17245"/>
        <dbReference type="ChEBI" id="CHEBI:17319"/>
        <dbReference type="ChEBI" id="CHEBI:57844"/>
        <dbReference type="ChEBI" id="CHEBI:58354"/>
        <dbReference type="ChEBI" id="CHEBI:59789"/>
        <dbReference type="ChEBI" id="CHEBI:137981"/>
        <dbReference type="EC" id="4.1.99.17"/>
    </reaction>
</comment>
<comment type="cofactor">
    <cofactor evidence="1">
        <name>[4Fe-4S] cluster</name>
        <dbReference type="ChEBI" id="CHEBI:49883"/>
    </cofactor>
    <text evidence="1">Binds 1 [4Fe-4S] cluster per subunit. The cluster is coordinated with 3 cysteines and an exchangeable S-adenosyl-L-methionine.</text>
</comment>
<comment type="pathway">
    <text evidence="1">Cofactor biosynthesis; thiamine diphosphate biosynthesis.</text>
</comment>
<comment type="subunit">
    <text evidence="1">Homodimer.</text>
</comment>
<comment type="similarity">
    <text evidence="1">Belongs to the ThiC family.</text>
</comment>
<sequence length="622" mass="69880">MSQSSKTLKNMSKVNEAFIKPFPSSNKIYVQGSCKDIQVPMREIILTDTIGELAEKNAPIHVYDTSGVYTDPNVKIDLRKGLGSIRSTWIEQRNDTEILTKLSSNFSNERRDDAELDVLRFEHLQVPRRAKNTKNVSQMYYAKQGIITSEMEYIAIRENCKWQEYKDQIGQNEGESFGANIPDVITSEFVRDEVSKGRAVIPANINHPETEPMIIGRNFMVKINGNIGNSALGSSIEQEVDKMVWGIRWGADTIMDLSTGKNIHETREWIIRNSPVPIGTVPIYQTLEKVNGIAEDLTWEVFRDTLIEQAEQGVDYFTIHAGVRLQYVPLTINRIIGIVSRGGSIMAKWCLAHHTESFIYTHFEDICEIMKQYDVTFSLGDGLRPGCIADANDAAQFGELETLGELTKIAWKHDVQTFIEGPGHVPMQMIKENMDKQLKECGEAPFYTLGPLTTDIAPGYDHITSAIGAAQIGWYGCAMLCYVTPKEHLGLPNQDDVKQGIIAYKIAAHAADLAKGHPGAQIRDNALSKARFEFRWEDQFNLGLDPDTARKYHDETMPKQAAKTSHFCSMCGPKFCSMKITQEIKTIDAGEIAKIKAIQIEMDKKSAEFLKNDSEIYMKEGA</sequence>
<keyword id="KW-0004">4Fe-4S</keyword>
<keyword id="KW-0408">Iron</keyword>
<keyword id="KW-0411">Iron-sulfur</keyword>
<keyword id="KW-0456">Lyase</keyword>
<keyword id="KW-0479">Metal-binding</keyword>
<keyword id="KW-0949">S-adenosyl-L-methionine</keyword>
<keyword id="KW-0784">Thiamine biosynthesis</keyword>
<keyword id="KW-0862">Zinc</keyword>
<evidence type="ECO:0000255" key="1">
    <source>
        <dbReference type="HAMAP-Rule" id="MF_00089"/>
    </source>
</evidence>
<reference key="1">
    <citation type="journal article" date="2007" name="Science">
        <title>The Calyptogena magnifica chemoautotrophic symbiont genome.</title>
        <authorList>
            <person name="Newton I.L.G."/>
            <person name="Woyke T."/>
            <person name="Auchtung T.A."/>
            <person name="Dilly G.F."/>
            <person name="Dutton R.J."/>
            <person name="Fisher M.C."/>
            <person name="Fontanez K.M."/>
            <person name="Lau E."/>
            <person name="Stewart F.J."/>
            <person name="Richardson P.M."/>
            <person name="Barry K.W."/>
            <person name="Saunders E."/>
            <person name="Detter J.C."/>
            <person name="Wu D."/>
            <person name="Eisen J.A."/>
            <person name="Cavanaugh C.M."/>
        </authorList>
    </citation>
    <scope>NUCLEOTIDE SEQUENCE [LARGE SCALE GENOMIC DNA]</scope>
</reference>
<proteinExistence type="inferred from homology"/>